<feature type="chain" id="PRO_1000122000" description="Chromosomal replication initiator protein DnaA">
    <location>
        <begin position="1"/>
        <end position="459"/>
    </location>
</feature>
<feature type="region of interest" description="Domain I, interacts with DnaA modulators" evidence="1">
    <location>
        <begin position="1"/>
        <end position="73"/>
    </location>
</feature>
<feature type="region of interest" description="Domain II" evidence="1">
    <location>
        <begin position="73"/>
        <end position="117"/>
    </location>
</feature>
<feature type="region of interest" description="Domain III, AAA+ region" evidence="1">
    <location>
        <begin position="118"/>
        <end position="334"/>
    </location>
</feature>
<feature type="region of interest" description="Domain IV, binds dsDNA" evidence="1">
    <location>
        <begin position="335"/>
        <end position="459"/>
    </location>
</feature>
<feature type="binding site" evidence="1">
    <location>
        <position position="162"/>
    </location>
    <ligand>
        <name>ATP</name>
        <dbReference type="ChEBI" id="CHEBI:30616"/>
    </ligand>
</feature>
<feature type="binding site" evidence="1">
    <location>
        <position position="164"/>
    </location>
    <ligand>
        <name>ATP</name>
        <dbReference type="ChEBI" id="CHEBI:30616"/>
    </ligand>
</feature>
<feature type="binding site" evidence="1">
    <location>
        <position position="165"/>
    </location>
    <ligand>
        <name>ATP</name>
        <dbReference type="ChEBI" id="CHEBI:30616"/>
    </ligand>
</feature>
<feature type="binding site" evidence="1">
    <location>
        <position position="166"/>
    </location>
    <ligand>
        <name>ATP</name>
        <dbReference type="ChEBI" id="CHEBI:30616"/>
    </ligand>
</feature>
<name>DNAA_NOSP7</name>
<accession>B2J2B2</accession>
<gene>
    <name evidence="1" type="primary">dnaA</name>
    <name type="ordered locus">Npun_F0001</name>
</gene>
<keyword id="KW-0067">ATP-binding</keyword>
<keyword id="KW-0963">Cytoplasm</keyword>
<keyword id="KW-0235">DNA replication</keyword>
<keyword id="KW-0238">DNA-binding</keyword>
<keyword id="KW-0446">Lipid-binding</keyword>
<keyword id="KW-0547">Nucleotide-binding</keyword>
<keyword id="KW-1185">Reference proteome</keyword>
<protein>
    <recommendedName>
        <fullName evidence="1">Chromosomal replication initiator protein DnaA</fullName>
    </recommendedName>
</protein>
<sequence>MEIPIESLWSQVLERLQVELSRPTFETWIKTASAERLENNCLVIRTPNPFARNWLQKYYINTIAHAVQDILGHPVGIYITVAQGDEVSHFSEREVSWESTNPSSIPESLPHHNHKTTELNSKYVFSRFVVGANNRMAHAASLAVAESPGKEFNPLFLCGGVGLGKTHLMQAIGHYRWKICPDCKIFYVSTEQFTNDLITAIRKDSMQSFREHYRAADVLLVDDIQFLEGKEYTQEEFFYTFNTLHEAGKQVVIASDRPPNQIPSLQERLCSRFSMGLIADIQKPDLETRMAILQKKAEDENIRLPRDVIEYIASNYTSNIRELEGALIRAVAYISIWGLPMTVENITPVLEPPNEKMAASPEAILKVVADNFDVSIDDLKGNSRRREISWARQIGMYLMRQHTSLSLPRIGEEFGGKDHTTVIYSCDKITQLHQGDRTLAQTLRQLSDRINMTSRSQKS</sequence>
<proteinExistence type="inferred from homology"/>
<reference key="1">
    <citation type="journal article" date="2013" name="Plant Physiol.">
        <title>A Nostoc punctiforme Sugar Transporter Necessary to Establish a Cyanobacterium-Plant Symbiosis.</title>
        <authorList>
            <person name="Ekman M."/>
            <person name="Picossi S."/>
            <person name="Campbell E.L."/>
            <person name="Meeks J.C."/>
            <person name="Flores E."/>
        </authorList>
    </citation>
    <scope>NUCLEOTIDE SEQUENCE [LARGE SCALE GENOMIC DNA]</scope>
    <source>
        <strain>ATCC 29133 / PCC 73102</strain>
    </source>
</reference>
<evidence type="ECO:0000255" key="1">
    <source>
        <dbReference type="HAMAP-Rule" id="MF_00377"/>
    </source>
</evidence>
<comment type="function">
    <text evidence="1">Plays an essential role in the initiation and regulation of chromosomal replication. ATP-DnaA binds to the origin of replication (oriC) to initiate formation of the DNA replication initiation complex once per cell cycle. Binds the DnaA box (a 9 base pair repeat at the origin) and separates the double-stranded (ds)DNA. Forms a right-handed helical filament on oriC DNA; dsDNA binds to the exterior of the filament while single-stranded (ss)DNA is stabiized in the filament's interior. The ATP-DnaA-oriC complex binds and stabilizes one strand of the AT-rich DNA unwinding element (DUE), permitting loading of DNA polymerase. After initiation quickly degrades to an ADP-DnaA complex that is not apt for DNA replication. Binds acidic phospholipids.</text>
</comment>
<comment type="subunit">
    <text evidence="1">Oligomerizes as a right-handed, spiral filament on DNA at oriC.</text>
</comment>
<comment type="subcellular location">
    <subcellularLocation>
        <location evidence="1">Cytoplasm</location>
    </subcellularLocation>
</comment>
<comment type="domain">
    <text evidence="1">Domain I is involved in oligomerization and binding regulators, domain II is flexibile and of varying length in different bacteria, domain III forms the AAA+ region, while domain IV binds dsDNA.</text>
</comment>
<comment type="similarity">
    <text evidence="1">Belongs to the DnaA family.</text>
</comment>
<organism>
    <name type="scientific">Nostoc punctiforme (strain ATCC 29133 / PCC 73102)</name>
    <dbReference type="NCBI Taxonomy" id="63737"/>
    <lineage>
        <taxon>Bacteria</taxon>
        <taxon>Bacillati</taxon>
        <taxon>Cyanobacteriota</taxon>
        <taxon>Cyanophyceae</taxon>
        <taxon>Nostocales</taxon>
        <taxon>Nostocaceae</taxon>
        <taxon>Nostoc</taxon>
    </lineage>
</organism>
<dbReference type="EMBL" id="CP001037">
    <property type="protein sequence ID" value="ACC78804.1"/>
    <property type="molecule type" value="Genomic_DNA"/>
</dbReference>
<dbReference type="RefSeq" id="WP_012406833.1">
    <property type="nucleotide sequence ID" value="NC_010628.1"/>
</dbReference>
<dbReference type="SMR" id="B2J2B2"/>
<dbReference type="STRING" id="63737.Npun_F0001"/>
<dbReference type="EnsemblBacteria" id="ACC78804">
    <property type="protein sequence ID" value="ACC78804"/>
    <property type="gene ID" value="Npun_F0001"/>
</dbReference>
<dbReference type="KEGG" id="npu:Npun_F0001"/>
<dbReference type="eggNOG" id="COG0593">
    <property type="taxonomic scope" value="Bacteria"/>
</dbReference>
<dbReference type="HOGENOM" id="CLU_026910_3_1_3"/>
<dbReference type="OrthoDB" id="9807019at2"/>
<dbReference type="PhylomeDB" id="B2J2B2"/>
<dbReference type="Proteomes" id="UP000001191">
    <property type="component" value="Chromosome"/>
</dbReference>
<dbReference type="GO" id="GO:0005737">
    <property type="term" value="C:cytoplasm"/>
    <property type="evidence" value="ECO:0007669"/>
    <property type="project" value="UniProtKB-SubCell"/>
</dbReference>
<dbReference type="GO" id="GO:0005886">
    <property type="term" value="C:plasma membrane"/>
    <property type="evidence" value="ECO:0007669"/>
    <property type="project" value="TreeGrafter"/>
</dbReference>
<dbReference type="GO" id="GO:0005524">
    <property type="term" value="F:ATP binding"/>
    <property type="evidence" value="ECO:0007669"/>
    <property type="project" value="UniProtKB-UniRule"/>
</dbReference>
<dbReference type="GO" id="GO:0016887">
    <property type="term" value="F:ATP hydrolysis activity"/>
    <property type="evidence" value="ECO:0007669"/>
    <property type="project" value="InterPro"/>
</dbReference>
<dbReference type="GO" id="GO:0003688">
    <property type="term" value="F:DNA replication origin binding"/>
    <property type="evidence" value="ECO:0007669"/>
    <property type="project" value="UniProtKB-UniRule"/>
</dbReference>
<dbReference type="GO" id="GO:0008289">
    <property type="term" value="F:lipid binding"/>
    <property type="evidence" value="ECO:0007669"/>
    <property type="project" value="UniProtKB-KW"/>
</dbReference>
<dbReference type="GO" id="GO:0006270">
    <property type="term" value="P:DNA replication initiation"/>
    <property type="evidence" value="ECO:0007669"/>
    <property type="project" value="UniProtKB-UniRule"/>
</dbReference>
<dbReference type="GO" id="GO:0006275">
    <property type="term" value="P:regulation of DNA replication"/>
    <property type="evidence" value="ECO:0007669"/>
    <property type="project" value="UniProtKB-UniRule"/>
</dbReference>
<dbReference type="CDD" id="cd00009">
    <property type="entry name" value="AAA"/>
    <property type="match status" value="1"/>
</dbReference>
<dbReference type="CDD" id="cd06571">
    <property type="entry name" value="Bac_DnaA_C"/>
    <property type="match status" value="1"/>
</dbReference>
<dbReference type="FunFam" id="3.40.50.300:FF:000150">
    <property type="entry name" value="Chromosomal replication initiator protein DnaA"/>
    <property type="match status" value="1"/>
</dbReference>
<dbReference type="Gene3D" id="1.10.1750.10">
    <property type="match status" value="1"/>
</dbReference>
<dbReference type="Gene3D" id="1.10.8.60">
    <property type="match status" value="1"/>
</dbReference>
<dbReference type="Gene3D" id="3.30.300.180">
    <property type="match status" value="1"/>
</dbReference>
<dbReference type="Gene3D" id="3.40.50.300">
    <property type="entry name" value="P-loop containing nucleotide triphosphate hydrolases"/>
    <property type="match status" value="1"/>
</dbReference>
<dbReference type="HAMAP" id="MF_00377">
    <property type="entry name" value="DnaA_bact"/>
    <property type="match status" value="1"/>
</dbReference>
<dbReference type="InterPro" id="IPR003593">
    <property type="entry name" value="AAA+_ATPase"/>
</dbReference>
<dbReference type="InterPro" id="IPR001957">
    <property type="entry name" value="Chromosome_initiator_DnaA"/>
</dbReference>
<dbReference type="InterPro" id="IPR020591">
    <property type="entry name" value="Chromosome_initiator_DnaA-like"/>
</dbReference>
<dbReference type="InterPro" id="IPR018312">
    <property type="entry name" value="Chromosome_initiator_DnaA_CS"/>
</dbReference>
<dbReference type="InterPro" id="IPR013159">
    <property type="entry name" value="DnaA_C"/>
</dbReference>
<dbReference type="InterPro" id="IPR013317">
    <property type="entry name" value="DnaA_dom"/>
</dbReference>
<dbReference type="InterPro" id="IPR024633">
    <property type="entry name" value="DnaA_N_dom"/>
</dbReference>
<dbReference type="InterPro" id="IPR038454">
    <property type="entry name" value="DnaA_N_sf"/>
</dbReference>
<dbReference type="InterPro" id="IPR027417">
    <property type="entry name" value="P-loop_NTPase"/>
</dbReference>
<dbReference type="InterPro" id="IPR010921">
    <property type="entry name" value="Trp_repressor/repl_initiator"/>
</dbReference>
<dbReference type="NCBIfam" id="TIGR00362">
    <property type="entry name" value="DnaA"/>
    <property type="match status" value="1"/>
</dbReference>
<dbReference type="PANTHER" id="PTHR30050">
    <property type="entry name" value="CHROMOSOMAL REPLICATION INITIATOR PROTEIN DNAA"/>
    <property type="match status" value="1"/>
</dbReference>
<dbReference type="PANTHER" id="PTHR30050:SF2">
    <property type="entry name" value="CHROMOSOMAL REPLICATION INITIATOR PROTEIN DNAA"/>
    <property type="match status" value="1"/>
</dbReference>
<dbReference type="Pfam" id="PF00308">
    <property type="entry name" value="Bac_DnaA"/>
    <property type="match status" value="1"/>
</dbReference>
<dbReference type="Pfam" id="PF08299">
    <property type="entry name" value="Bac_DnaA_C"/>
    <property type="match status" value="1"/>
</dbReference>
<dbReference type="Pfam" id="PF11638">
    <property type="entry name" value="DnaA_N"/>
    <property type="match status" value="1"/>
</dbReference>
<dbReference type="PRINTS" id="PR00051">
    <property type="entry name" value="DNAA"/>
</dbReference>
<dbReference type="SMART" id="SM00382">
    <property type="entry name" value="AAA"/>
    <property type="match status" value="1"/>
</dbReference>
<dbReference type="SMART" id="SM00760">
    <property type="entry name" value="Bac_DnaA_C"/>
    <property type="match status" value="1"/>
</dbReference>
<dbReference type="SUPFAM" id="SSF52540">
    <property type="entry name" value="P-loop containing nucleoside triphosphate hydrolases"/>
    <property type="match status" value="1"/>
</dbReference>
<dbReference type="SUPFAM" id="SSF48295">
    <property type="entry name" value="TrpR-like"/>
    <property type="match status" value="1"/>
</dbReference>
<dbReference type="PROSITE" id="PS01008">
    <property type="entry name" value="DNAA"/>
    <property type="match status" value="1"/>
</dbReference>